<dbReference type="EMBL" id="EF110895">
    <property type="protein sequence ID" value="ABO31316.1"/>
    <property type="molecule type" value="Genomic_DNA"/>
</dbReference>
<dbReference type="EMBL" id="AM920436">
    <property type="protein sequence ID" value="CAP96026.1"/>
    <property type="molecule type" value="Genomic_DNA"/>
</dbReference>
<dbReference type="RefSeq" id="XP_002568161.1">
    <property type="nucleotide sequence ID" value="XM_002568115.1"/>
</dbReference>
<dbReference type="STRING" id="500485.A7KAM9"/>
<dbReference type="GlyCosmos" id="A7KAM9">
    <property type="glycosylation" value="1 site, No reported glycans"/>
</dbReference>
<dbReference type="GeneID" id="8309762"/>
<dbReference type="KEGG" id="pcs:N7525_007709"/>
<dbReference type="VEuPathDB" id="FungiDB:PCH_Pc21g11290"/>
<dbReference type="eggNOG" id="ENOG502QR9I">
    <property type="taxonomic scope" value="Eukaryota"/>
</dbReference>
<dbReference type="HOGENOM" id="CLU_017518_1_0_1"/>
<dbReference type="OMA" id="QQQWEMY"/>
<dbReference type="OrthoDB" id="192733at2759"/>
<dbReference type="BioCyc" id="PCHR:PC21G11290-MONOMER"/>
<dbReference type="Proteomes" id="UP000000724">
    <property type="component" value="Contig Pc00c21"/>
</dbReference>
<dbReference type="GO" id="GO:0005774">
    <property type="term" value="C:vacuolar membrane"/>
    <property type="evidence" value="ECO:0007669"/>
    <property type="project" value="UniProtKB-SubCell"/>
</dbReference>
<dbReference type="GO" id="GO:0032974">
    <property type="term" value="P:amino acid transmembrane export from vacuole"/>
    <property type="evidence" value="ECO:0007669"/>
    <property type="project" value="InterPro"/>
</dbReference>
<dbReference type="GO" id="GO:0006914">
    <property type="term" value="P:autophagy"/>
    <property type="evidence" value="ECO:0007669"/>
    <property type="project" value="UniProtKB-KW"/>
</dbReference>
<dbReference type="CDD" id="cd17483">
    <property type="entry name" value="MFS_Atg22_like"/>
    <property type="match status" value="1"/>
</dbReference>
<dbReference type="Gene3D" id="1.20.1250.20">
    <property type="entry name" value="MFS general substrate transporter like domains"/>
    <property type="match status" value="1"/>
</dbReference>
<dbReference type="InterPro" id="IPR044738">
    <property type="entry name" value="Atg22"/>
</dbReference>
<dbReference type="InterPro" id="IPR024671">
    <property type="entry name" value="Atg22-like"/>
</dbReference>
<dbReference type="InterPro" id="IPR050495">
    <property type="entry name" value="ATG22/LtaA_families"/>
</dbReference>
<dbReference type="InterPro" id="IPR036259">
    <property type="entry name" value="MFS_trans_sf"/>
</dbReference>
<dbReference type="PANTHER" id="PTHR23519">
    <property type="entry name" value="AUTOPHAGY-RELATED PROTEIN 22"/>
    <property type="match status" value="1"/>
</dbReference>
<dbReference type="PANTHER" id="PTHR23519:SF1">
    <property type="entry name" value="AUTOPHAGY-RELATED PROTEIN 22"/>
    <property type="match status" value="1"/>
</dbReference>
<dbReference type="Pfam" id="PF11700">
    <property type="entry name" value="ATG22"/>
    <property type="match status" value="1"/>
</dbReference>
<dbReference type="SUPFAM" id="SSF103473">
    <property type="entry name" value="MFS general substrate transporter"/>
    <property type="match status" value="1"/>
</dbReference>
<gene>
    <name type="primary">atg22-1</name>
    <name type="synonym">atg22a-1</name>
    <name type="ORF">Pc21g11290</name>
</gene>
<organism>
    <name type="scientific">Penicillium rubens (strain ATCC 28089 / DSM 1075 / NRRL 1951 / Wisconsin 54-1255)</name>
    <name type="common">Penicillium chrysogenum</name>
    <dbReference type="NCBI Taxonomy" id="500485"/>
    <lineage>
        <taxon>Eukaryota</taxon>
        <taxon>Fungi</taxon>
        <taxon>Dikarya</taxon>
        <taxon>Ascomycota</taxon>
        <taxon>Pezizomycotina</taxon>
        <taxon>Eurotiomycetes</taxon>
        <taxon>Eurotiomycetidae</taxon>
        <taxon>Eurotiales</taxon>
        <taxon>Aspergillaceae</taxon>
        <taxon>Penicillium</taxon>
        <taxon>Penicillium chrysogenum species complex</taxon>
    </lineage>
</organism>
<reference key="1">
    <citation type="journal article" date="2007" name="Autophagy">
        <title>ATG genes involved in non-selective autophagy are conserved from yeast to man, but the selective Cvt and pexophagy pathways also require organism-specific genes.</title>
        <authorList>
            <person name="Meijer W.H."/>
            <person name="van der Klei I.J."/>
            <person name="Veenhuis M."/>
            <person name="Kiel J.A.K.W."/>
        </authorList>
    </citation>
    <scope>NUCLEOTIDE SEQUENCE [GENOMIC DNA]</scope>
    <scope>FUNCTION</scope>
</reference>
<reference key="2">
    <citation type="journal article" date="2008" name="Nat. Biotechnol.">
        <title>Genome sequencing and analysis of the filamentous fungus Penicillium chrysogenum.</title>
        <authorList>
            <person name="van den Berg M.A."/>
            <person name="Albang R."/>
            <person name="Albermann K."/>
            <person name="Badger J.H."/>
            <person name="Daran J.-M."/>
            <person name="Driessen A.J.M."/>
            <person name="Garcia-Estrada C."/>
            <person name="Fedorova N.D."/>
            <person name="Harris D.M."/>
            <person name="Heijne W.H.M."/>
            <person name="Joardar V.S."/>
            <person name="Kiel J.A.K.W."/>
            <person name="Kovalchuk A."/>
            <person name="Martin J.F."/>
            <person name="Nierman W.C."/>
            <person name="Nijland J.G."/>
            <person name="Pronk J.T."/>
            <person name="Roubos J.A."/>
            <person name="van der Klei I.J."/>
            <person name="van Peij N.N.M.E."/>
            <person name="Veenhuis M."/>
            <person name="von Doehren H."/>
            <person name="Wagner C."/>
            <person name="Wortman J.R."/>
            <person name="Bovenberg R.A.L."/>
        </authorList>
    </citation>
    <scope>NUCLEOTIDE SEQUENCE [LARGE SCALE GENOMIC DNA]</scope>
    <source>
        <strain>ATCC 28089 / DSM 1075 / NRRL 1951 / Wisconsin 54-1255</strain>
    </source>
</reference>
<protein>
    <recommendedName>
        <fullName>Autophagy-related protein 22-1</fullName>
    </recommendedName>
</protein>
<sequence>MSIQENVESPQYPGDDTRPTSKRELAGWYCYGWAAEVFVVCAMGSFLPITLEQMARDRGVLLSDKTTPCSATWRPPLPPPGSDAPVYLPQVSDGGQCIIYFLGAEINTASFALYTFSLSVLVQAVIIISMSGAADHGTYRKKLLIVFAFIGSIATMLFLVVVPKVYLLGGLLAIISNTCFGASFVLLNSFLPVLVRHHPSLKESEEVASPDDNVTGPRGDPLFSSTGDIDRTNVDDSTPLLGPNREAGKTSAATITSLELRLSTRISSYGIGIGYIGAVILQVISILVVVVVRPPTFSLRLVLFLIGLWWFVFTIPASLWLRTRPGPPLLDSGGKPLHSWTGYMVYAWKSLGKTVTRARQLKDIVIFLAAWFLLSDGIATVSGTAVLFAKTQLNMKPAALGLINVIVMLAGVFGAFSWSYISNFFNLRASQTIIACIILFELIPLYGLLGFIPAVQRVGLGLHQPWEMYPLGALYGLVMGGLSSYCRSFFGQLIPPGYEAAFYALYAITDKGSSIFGPAIVGAITDRYGEIRPAFVFLAVLIFVPLPLMLLVDVDRGKRDAVALGAELDGIPQGSEYGAISDDQTTEDPIEE</sequence>
<evidence type="ECO:0000250" key="1"/>
<evidence type="ECO:0000255" key="2"/>
<evidence type="ECO:0000256" key="3">
    <source>
        <dbReference type="SAM" id="MobiDB-lite"/>
    </source>
</evidence>
<evidence type="ECO:0000269" key="4">
    <source>
    </source>
</evidence>
<evidence type="ECO:0000305" key="5"/>
<accession>A7KAM9</accession>
<accession>B6HK49</accession>
<name>AT221_PENRW</name>
<comment type="function">
    <text evidence="1 4">Vacuolar effluxer which mediate the efflux of amino acids resulting from autophagic degradation. The release of autophagic amino acids allows the maintenance of protein synthesis and viability during nitrogen starvation (By similarity).</text>
</comment>
<comment type="subcellular location">
    <subcellularLocation>
        <location evidence="1">Vacuole membrane</location>
        <topology evidence="1">Multi-pass membrane protein</topology>
    </subcellularLocation>
    <text evidence="1">Vacuole and punctate structures.</text>
</comment>
<comment type="similarity">
    <text evidence="5">Belongs to the ATG22 family.</text>
</comment>
<proteinExistence type="inferred from homology"/>
<feature type="chain" id="PRO_0000318028" description="Autophagy-related protein 22-1">
    <location>
        <begin position="1"/>
        <end position="592"/>
    </location>
</feature>
<feature type="transmembrane region" description="Helical" evidence="2">
    <location>
        <begin position="31"/>
        <end position="51"/>
    </location>
</feature>
<feature type="transmembrane region" description="Helical" evidence="2">
    <location>
        <begin position="108"/>
        <end position="128"/>
    </location>
</feature>
<feature type="transmembrane region" description="Helical" evidence="2">
    <location>
        <begin position="143"/>
        <end position="163"/>
    </location>
</feature>
<feature type="transmembrane region" description="Helical" evidence="2">
    <location>
        <begin position="167"/>
        <end position="187"/>
    </location>
</feature>
<feature type="transmembrane region" description="Helical" evidence="2">
    <location>
        <begin position="271"/>
        <end position="291"/>
    </location>
</feature>
<feature type="transmembrane region" description="Helical" evidence="2">
    <location>
        <begin position="301"/>
        <end position="321"/>
    </location>
</feature>
<feature type="transmembrane region" description="Helical" evidence="2">
    <location>
        <begin position="364"/>
        <end position="384"/>
    </location>
</feature>
<feature type="transmembrane region" description="Helical" evidence="2">
    <location>
        <begin position="398"/>
        <end position="418"/>
    </location>
</feature>
<feature type="transmembrane region" description="Helical" evidence="2">
    <location>
        <begin position="433"/>
        <end position="453"/>
    </location>
</feature>
<feature type="transmembrane region" description="Helical" evidence="2">
    <location>
        <begin position="468"/>
        <end position="490"/>
    </location>
</feature>
<feature type="transmembrane region" description="Helical" evidence="2">
    <location>
        <begin position="502"/>
        <end position="524"/>
    </location>
</feature>
<feature type="transmembrane region" description="Helical" evidence="2">
    <location>
        <begin position="534"/>
        <end position="554"/>
    </location>
</feature>
<feature type="region of interest" description="Disordered" evidence="3">
    <location>
        <begin position="572"/>
        <end position="592"/>
    </location>
</feature>
<feature type="glycosylation site" description="N-linked (GlcNAc...) asparagine" evidence="2">
    <location>
        <position position="213"/>
    </location>
</feature>
<keyword id="KW-0029">Amino-acid transport</keyword>
<keyword id="KW-0072">Autophagy</keyword>
<keyword id="KW-0325">Glycoprotein</keyword>
<keyword id="KW-0472">Membrane</keyword>
<keyword id="KW-1185">Reference proteome</keyword>
<keyword id="KW-0812">Transmembrane</keyword>
<keyword id="KW-1133">Transmembrane helix</keyword>
<keyword id="KW-0813">Transport</keyword>
<keyword id="KW-0926">Vacuole</keyword>